<organism>
    <name type="scientific">Pseudomonas putida</name>
    <name type="common">Arthrobacter siderocapsulatus</name>
    <dbReference type="NCBI Taxonomy" id="303"/>
    <lineage>
        <taxon>Bacteria</taxon>
        <taxon>Pseudomonadati</taxon>
        <taxon>Pseudomonadota</taxon>
        <taxon>Gammaproteobacteria</taxon>
        <taxon>Pseudomonadales</taxon>
        <taxon>Pseudomonadaceae</taxon>
        <taxon>Pseudomonas</taxon>
    </lineage>
</organism>
<proteinExistence type="inferred from homology"/>
<feature type="chain" id="PRO_0000214674" description="Probable 2-(5''-triphosphoribosyl)-3'-dephosphocoenzyme-A synthase">
    <location>
        <begin position="1"/>
        <end position="280"/>
    </location>
</feature>
<accession>Q9Z452</accession>
<evidence type="ECO:0000305" key="1"/>
<sequence length="280" mass="29150">MRPAQPTKISLADHLAALAVEALIDEADLSPKPGLVDRRSNGAHPDMSLPLMHASALSLWPCLRQMAEAAQSFGEICQPLRASLGQLGREGEVAMLATTGGVNTHRGAIWALGLLVAVTALDPLANANTLAVRAGRLALLDDPAMVPQDSHGQQVRRRYGTGGAREQAQQGFPAVIGHGLPQLQRSRAAGASEQHARLDALLAIMAVLSDTCVLWRSGPSGLATVQQGALAVLAEGGSATLAGRRQLRELDQHLLHLNASPGGAADLLAACLFLDKAGSL</sequence>
<reference key="1">
    <citation type="journal article" date="1999" name="FEMS Microbiol. Lett.">
        <title>Cloning and characterization of mdc genes encoding malonate decarboxylase from Pseudomonas putida.</title>
        <authorList>
            <person name="Chohnan S."/>
            <person name="Kurusu Y."/>
            <person name="Nishihara H."/>
            <person name="Takamura Y."/>
        </authorList>
    </citation>
    <scope>NUCLEOTIDE SEQUENCE [GENOMIC DNA]</scope>
    <source>
        <strain>JCM 20089 / IAM 1177</strain>
    </source>
</reference>
<name>MDCB_PSEPU</name>
<comment type="function">
    <text>Involved in the formation of 2-(5''-phosphoribosyl)-3'-dephosphocoenzyme-A, the prosthetic group of the acyl-carrier protein of the malonate decarboxylase.</text>
</comment>
<comment type="catalytic activity">
    <reaction>
        <text>3'-dephospho-CoA + ATP = 2'-(5''-triphospho-alpha-D-ribosyl)-3'-dephospho-CoA + adenine</text>
        <dbReference type="Rhea" id="RHEA:15117"/>
        <dbReference type="ChEBI" id="CHEBI:16708"/>
        <dbReference type="ChEBI" id="CHEBI:30616"/>
        <dbReference type="ChEBI" id="CHEBI:57328"/>
        <dbReference type="ChEBI" id="CHEBI:61378"/>
        <dbReference type="EC" id="2.4.2.52"/>
    </reaction>
</comment>
<comment type="similarity">
    <text evidence="1">Belongs to the CitG/MdcB family.</text>
</comment>
<comment type="sequence caution" evidence="1">
    <conflict type="erroneous initiation">
        <sequence resource="EMBL-CDS" id="BAA36205"/>
    </conflict>
</comment>
<gene>
    <name type="primary">mdcB</name>
</gene>
<protein>
    <recommendedName>
        <fullName>Probable 2-(5''-triphosphoribosyl)-3'-dephosphocoenzyme-A synthase</fullName>
        <shortName>2-(5''-triphosphoribosyl)-3'-dephospho-CoA synthase</shortName>
        <ecNumber>2.4.2.52</ecNumber>
    </recommendedName>
</protein>
<keyword id="KW-0067">ATP-binding</keyword>
<keyword id="KW-0547">Nucleotide-binding</keyword>
<keyword id="KW-0808">Transferase</keyword>
<dbReference type="EC" id="2.4.2.52"/>
<dbReference type="EMBL" id="AB017138">
    <property type="protein sequence ID" value="BAA36205.1"/>
    <property type="status" value="ALT_INIT"/>
    <property type="molecule type" value="Genomic_DNA"/>
</dbReference>
<dbReference type="GO" id="GO:0005524">
    <property type="term" value="F:ATP binding"/>
    <property type="evidence" value="ECO:0007669"/>
    <property type="project" value="UniProtKB-KW"/>
</dbReference>
<dbReference type="GO" id="GO:0046917">
    <property type="term" value="F:triphosphoribosyl-dephospho-CoA synthase activity"/>
    <property type="evidence" value="ECO:0007669"/>
    <property type="project" value="UniProtKB-UniRule"/>
</dbReference>
<dbReference type="GO" id="GO:0051191">
    <property type="term" value="P:prosthetic group biosynthetic process"/>
    <property type="evidence" value="ECO:0007669"/>
    <property type="project" value="TreeGrafter"/>
</dbReference>
<dbReference type="Gene3D" id="1.10.4200.10">
    <property type="entry name" value="Triphosphoribosyl-dephospho-CoA protein"/>
    <property type="match status" value="2"/>
</dbReference>
<dbReference type="HAMAP" id="MF_01883">
    <property type="entry name" value="MdcB"/>
    <property type="match status" value="1"/>
</dbReference>
<dbReference type="InterPro" id="IPR002736">
    <property type="entry name" value="CitG"/>
</dbReference>
<dbReference type="InterPro" id="IPR017555">
    <property type="entry name" value="TriPribosyl-deP-CoA_syn"/>
</dbReference>
<dbReference type="NCBIfam" id="TIGR03132">
    <property type="entry name" value="malonate_mdcB"/>
    <property type="match status" value="1"/>
</dbReference>
<dbReference type="NCBIfam" id="NF002315">
    <property type="entry name" value="PRK01237.1"/>
    <property type="match status" value="1"/>
</dbReference>
<dbReference type="PANTHER" id="PTHR30201:SF2">
    <property type="entry name" value="2-(5''-TRIPHOSPHORIBOSYL)-3'-DEPHOSPHOCOENZYME-A SYNTHASE"/>
    <property type="match status" value="1"/>
</dbReference>
<dbReference type="PANTHER" id="PTHR30201">
    <property type="entry name" value="TRIPHOSPHORIBOSYL-DEPHOSPHO-COA SYNTHASE"/>
    <property type="match status" value="1"/>
</dbReference>
<dbReference type="Pfam" id="PF01874">
    <property type="entry name" value="CitG"/>
    <property type="match status" value="1"/>
</dbReference>